<feature type="chain" id="PRO_0000446675" description="SAGA-associated factor 11">
    <location>
        <begin position="1"/>
        <end position="181"/>
    </location>
</feature>
<feature type="zinc finger region" description="SGF11-type" evidence="1">
    <location>
        <begin position="93"/>
        <end position="114"/>
    </location>
</feature>
<feature type="region of interest" description="Disordered" evidence="2">
    <location>
        <begin position="116"/>
        <end position="181"/>
    </location>
</feature>
<feature type="compositionally biased region" description="Basic residues" evidence="2">
    <location>
        <begin position="116"/>
        <end position="125"/>
    </location>
</feature>
<feature type="compositionally biased region" description="Low complexity" evidence="2">
    <location>
        <begin position="126"/>
        <end position="153"/>
    </location>
</feature>
<reference key="1">
    <citation type="journal article" date="2000" name="DNA Res.">
        <title>Structural analysis of Arabidopsis thaliana chromosome 5. X. Sequence features of the regions of 3,076,755 bp covered by sixty P1 and TAC clones.</title>
        <authorList>
            <person name="Sato S."/>
            <person name="Nakamura Y."/>
            <person name="Kaneko T."/>
            <person name="Katoh T."/>
            <person name="Asamizu E."/>
            <person name="Kotani H."/>
            <person name="Tabata S."/>
        </authorList>
    </citation>
    <scope>NUCLEOTIDE SEQUENCE [LARGE SCALE GENOMIC DNA]</scope>
    <source>
        <strain>cv. Columbia</strain>
    </source>
</reference>
<reference key="2">
    <citation type="journal article" date="2017" name="Plant J.">
        <title>Araport11: a complete reannotation of the Arabidopsis thaliana reference genome.</title>
        <authorList>
            <person name="Cheng C.Y."/>
            <person name="Krishnakumar V."/>
            <person name="Chan A.P."/>
            <person name="Thibaud-Nissen F."/>
            <person name="Schobel S."/>
            <person name="Town C.D."/>
        </authorList>
    </citation>
    <scope>GENOME REANNOTATION</scope>
    <source>
        <strain>cv. Columbia</strain>
    </source>
</reference>
<reference key="3">
    <citation type="journal article" date="2003" name="Science">
        <title>Empirical analysis of transcriptional activity in the Arabidopsis genome.</title>
        <authorList>
            <person name="Yamada K."/>
            <person name="Lim J."/>
            <person name="Dale J.M."/>
            <person name="Chen H."/>
            <person name="Shinn P."/>
            <person name="Palm C.J."/>
            <person name="Southwick A.M."/>
            <person name="Wu H.C."/>
            <person name="Kim C.J."/>
            <person name="Nguyen M."/>
            <person name="Pham P.K."/>
            <person name="Cheuk R.F."/>
            <person name="Karlin-Newmann G."/>
            <person name="Liu S.X."/>
            <person name="Lam B."/>
            <person name="Sakano H."/>
            <person name="Wu T."/>
            <person name="Yu G."/>
            <person name="Miranda M."/>
            <person name="Quach H.L."/>
            <person name="Tripp M."/>
            <person name="Chang C.H."/>
            <person name="Lee J.M."/>
            <person name="Toriumi M.J."/>
            <person name="Chan M.M."/>
            <person name="Tang C.C."/>
            <person name="Onodera C.S."/>
            <person name="Deng J.M."/>
            <person name="Akiyama K."/>
            <person name="Ansari Y."/>
            <person name="Arakawa T."/>
            <person name="Banh J."/>
            <person name="Banno F."/>
            <person name="Bowser L."/>
            <person name="Brooks S.Y."/>
            <person name="Carninci P."/>
            <person name="Chao Q."/>
            <person name="Choy N."/>
            <person name="Enju A."/>
            <person name="Goldsmith A.D."/>
            <person name="Gurjal M."/>
            <person name="Hansen N.F."/>
            <person name="Hayashizaki Y."/>
            <person name="Johnson-Hopson C."/>
            <person name="Hsuan V.W."/>
            <person name="Iida K."/>
            <person name="Karnes M."/>
            <person name="Khan S."/>
            <person name="Koesema E."/>
            <person name="Ishida J."/>
            <person name="Jiang P.X."/>
            <person name="Jones T."/>
            <person name="Kawai J."/>
            <person name="Kamiya A."/>
            <person name="Meyers C."/>
            <person name="Nakajima M."/>
            <person name="Narusaka M."/>
            <person name="Seki M."/>
            <person name="Sakurai T."/>
            <person name="Satou M."/>
            <person name="Tamse R."/>
            <person name="Vaysberg M."/>
            <person name="Wallender E.K."/>
            <person name="Wong C."/>
            <person name="Yamamura Y."/>
            <person name="Yuan S."/>
            <person name="Shinozaki K."/>
            <person name="Davis R.W."/>
            <person name="Theologis A."/>
            <person name="Ecker J.R."/>
        </authorList>
    </citation>
    <scope>NUCLEOTIDE SEQUENCE [LARGE SCALE MRNA]</scope>
    <source>
        <strain>cv. Columbia</strain>
    </source>
</reference>
<reference key="4">
    <citation type="journal article" date="2018" name="J. Mol. Biol.">
        <title>The adaptor protein ENY2 is a component of the deubiquitination module of the Arabidopsis SAGA transcriptional co-activator complex but not of the TREX-2 complex.</title>
        <authorList>
            <person name="Pfab A."/>
            <person name="Bruckmann A."/>
            <person name="Nazet J."/>
            <person name="Merkl R."/>
            <person name="Grasser K.D."/>
        </authorList>
    </citation>
    <scope>FUNCTION</scope>
    <scope>IDENTIFICATION BY MASS SPECTROMETRY</scope>
    <scope>SUBUNIT</scope>
    <scope>INTERACTION WITH ENY2</scope>
    <scope>DISRUPTION PHENOTYPE</scope>
</reference>
<reference key="5">
    <citation type="journal article" date="2018" name="Elife">
        <title>DET1-mediated degradation of a SAGA-like deubiquitination module controls H2Bub homeostasis.</title>
        <authorList>
            <person name="Nassrallah A."/>
            <person name="Rougee M."/>
            <person name="Bourbousse C."/>
            <person name="Drevensek S."/>
            <person name="Fonseca S."/>
            <person name="Iniesto E."/>
            <person name="Ait-Mohamed O."/>
            <person name="Deton-Cabanillas A.F."/>
            <person name="Zabulon G."/>
            <person name="Ahmed I."/>
            <person name="Stroebel D."/>
            <person name="Masson V."/>
            <person name="Lombard B."/>
            <person name="Eeckhout D."/>
            <person name="Gevaert K."/>
            <person name="Loew D."/>
            <person name="Genovesio A."/>
            <person name="Breyton C."/>
            <person name="de Jaeger G."/>
            <person name="Bowler C."/>
            <person name="Rubio V."/>
            <person name="Barneche F."/>
        </authorList>
    </citation>
    <scope>FUNCTION</scope>
    <scope>IDENTIFICATION BY MASS SPECTROMETRY</scope>
    <scope>SUBUNIT</scope>
    <scope>INTERACTION WITH DDA1</scope>
    <scope>SUBCELLULAR LOCATION</scope>
    <scope>UBIQUITINATION</scope>
</reference>
<evidence type="ECO:0000255" key="1"/>
<evidence type="ECO:0000256" key="2">
    <source>
        <dbReference type="SAM" id="MobiDB-lite"/>
    </source>
</evidence>
<evidence type="ECO:0000269" key="3">
    <source>
    </source>
</evidence>
<evidence type="ECO:0000269" key="4">
    <source>
    </source>
</evidence>
<evidence type="ECO:0000303" key="5">
    <source>
    </source>
</evidence>
<evidence type="ECO:0000305" key="6"/>
<evidence type="ECO:0000312" key="7">
    <source>
        <dbReference type="Araport" id="AT5G58575"/>
    </source>
</evidence>
<evidence type="ECO:0000312" key="8">
    <source>
        <dbReference type="EMBL" id="AB020755"/>
    </source>
</evidence>
<proteinExistence type="evidence at protein level"/>
<keyword id="KW-0010">Activator</keyword>
<keyword id="KW-0156">Chromatin regulator</keyword>
<keyword id="KW-0479">Metal-binding</keyword>
<keyword id="KW-0539">Nucleus</keyword>
<keyword id="KW-1185">Reference proteome</keyword>
<keyword id="KW-0804">Transcription</keyword>
<keyword id="KW-0805">Transcription regulation</keyword>
<keyword id="KW-0832">Ubl conjugation</keyword>
<keyword id="KW-0833">Ubl conjugation pathway</keyword>
<keyword id="KW-0862">Zinc</keyword>
<keyword id="KW-0863">Zinc-finger</keyword>
<name>SGF11_ARATH</name>
<accession>Q94BV2</accession>
<gene>
    <name evidence="5" type="primary">SGF11</name>
    <name evidence="7" type="ordered locus">At5g58575</name>
    <name evidence="8" type="ORF">MZN1</name>
</gene>
<sequence length="181" mass="19677">MSGAEDNKSSHAQLSSQIFLDLVDSVIADVASECHRVARLGLDRDLDIVEEELRLSVEARAKIADPSNNLETNTKYVVDIFGQTHPPVASEVFNCMNCGRQIVAGRFAPHLEKCMGKGRKARAKTTRSTTAAQNRNARRSPNPRYSPYPNSASENQLASGSPGVAGEDCSNFTVRENVKGD</sequence>
<dbReference type="EMBL" id="AB020755">
    <property type="status" value="NOT_ANNOTATED_CDS"/>
    <property type="molecule type" value="Genomic_DNA"/>
</dbReference>
<dbReference type="EMBL" id="CP002688">
    <property type="protein sequence ID" value="AED97071.1"/>
    <property type="molecule type" value="Genomic_DNA"/>
</dbReference>
<dbReference type="EMBL" id="CP002688">
    <property type="protein sequence ID" value="ANM70291.1"/>
    <property type="molecule type" value="Genomic_DNA"/>
</dbReference>
<dbReference type="EMBL" id="AY039865">
    <property type="protein sequence ID" value="AAK63969.1"/>
    <property type="molecule type" value="mRNA"/>
</dbReference>
<dbReference type="EMBL" id="AY077659">
    <property type="protein sequence ID" value="AAL76137.1"/>
    <property type="molecule type" value="mRNA"/>
</dbReference>
<dbReference type="RefSeq" id="NP_001318831.1">
    <property type="nucleotide sequence ID" value="NM_001345305.1"/>
</dbReference>
<dbReference type="RefSeq" id="NP_200665.2">
    <property type="nucleotide sequence ID" value="NM_125243.5"/>
</dbReference>
<dbReference type="FunCoup" id="Q94BV2">
    <property type="interactions" value="53"/>
</dbReference>
<dbReference type="IntAct" id="Q94BV2">
    <property type="interactions" value="8"/>
</dbReference>
<dbReference type="STRING" id="3702.Q94BV2"/>
<dbReference type="PaxDb" id="3702-AT5G58575.1"/>
<dbReference type="ProteomicsDB" id="189271"/>
<dbReference type="EnsemblPlants" id="AT5G58575.1">
    <property type="protein sequence ID" value="AT5G58575.1"/>
    <property type="gene ID" value="AT5G58575"/>
</dbReference>
<dbReference type="EnsemblPlants" id="AT5G58575.2">
    <property type="protein sequence ID" value="AT5G58575.2"/>
    <property type="gene ID" value="AT5G58575"/>
</dbReference>
<dbReference type="GeneID" id="835971"/>
<dbReference type="Gramene" id="AT5G58575.1">
    <property type="protein sequence ID" value="AT5G58575.1"/>
    <property type="gene ID" value="AT5G58575"/>
</dbReference>
<dbReference type="Gramene" id="AT5G58575.2">
    <property type="protein sequence ID" value="AT5G58575.2"/>
    <property type="gene ID" value="AT5G58575"/>
</dbReference>
<dbReference type="KEGG" id="ath:AT5G58575"/>
<dbReference type="Araport" id="AT5G58575"/>
<dbReference type="TAIR" id="AT5G58575">
    <property type="gene designation" value="SGF11"/>
</dbReference>
<dbReference type="eggNOG" id="KOG2612">
    <property type="taxonomic scope" value="Eukaryota"/>
</dbReference>
<dbReference type="HOGENOM" id="CLU_110436_0_0_1"/>
<dbReference type="InParanoid" id="Q94BV2"/>
<dbReference type="OMA" id="GENNSKH"/>
<dbReference type="PhylomeDB" id="Q94BV2"/>
<dbReference type="PRO" id="PR:Q94BV2"/>
<dbReference type="Proteomes" id="UP000006548">
    <property type="component" value="Chromosome 5"/>
</dbReference>
<dbReference type="ExpressionAtlas" id="Q94BV2">
    <property type="expression patterns" value="baseline and differential"/>
</dbReference>
<dbReference type="GO" id="GO:0071819">
    <property type="term" value="C:DUBm complex"/>
    <property type="evidence" value="ECO:0000353"/>
    <property type="project" value="TAIR"/>
</dbReference>
<dbReference type="GO" id="GO:0005654">
    <property type="term" value="C:nucleoplasm"/>
    <property type="evidence" value="ECO:0007669"/>
    <property type="project" value="UniProtKB-SubCell"/>
</dbReference>
<dbReference type="GO" id="GO:0070461">
    <property type="term" value="C:SAGA-type complex"/>
    <property type="evidence" value="ECO:0000353"/>
    <property type="project" value="TAIR"/>
</dbReference>
<dbReference type="GO" id="GO:0008270">
    <property type="term" value="F:zinc ion binding"/>
    <property type="evidence" value="ECO:0007669"/>
    <property type="project" value="UniProtKB-KW"/>
</dbReference>
<dbReference type="GO" id="GO:0006325">
    <property type="term" value="P:chromatin organization"/>
    <property type="evidence" value="ECO:0007669"/>
    <property type="project" value="UniProtKB-KW"/>
</dbReference>
<dbReference type="FunFam" id="3.30.160.60:FF:000118">
    <property type="entry name" value="Ataxin-7-like protein 3"/>
    <property type="match status" value="1"/>
</dbReference>
<dbReference type="Gene3D" id="3.30.160.60">
    <property type="entry name" value="Classic Zinc Finger"/>
    <property type="match status" value="1"/>
</dbReference>
<dbReference type="InterPro" id="IPR013246">
    <property type="entry name" value="SAGA_su_Sgf11"/>
</dbReference>
<dbReference type="PANTHER" id="PTHR47674">
    <property type="entry name" value="SAGA-ASSOCIATED FACTOR 11"/>
    <property type="match status" value="1"/>
</dbReference>
<dbReference type="PANTHER" id="PTHR47674:SF3">
    <property type="entry name" value="SAGA-ASSOCIATED FACTOR 11"/>
    <property type="match status" value="1"/>
</dbReference>
<dbReference type="Pfam" id="PF08209">
    <property type="entry name" value="Sgf11"/>
    <property type="match status" value="1"/>
</dbReference>
<comment type="function">
    <text evidence="3 4">Component of a deubiquitination module (DUB module) that specifically deubiquinates monoubiquinated histone H2B (H2Bub) (PubMed:29588169, PubMed:30192741). Does not seem to be a component of the TREX-2 complex (PubMed:29588169). Seems to act independently of the SAGA multiprotein complex (PubMed:30192741). The DUB module is responsible for the major H2Bub deubiquitinase activity in Arabidopsis (PubMed:30192741).</text>
</comment>
<comment type="subunit">
    <text evidence="3 4">Component of a deubiquitination module (DUB module) formed by ENY2, SGF11, and UBP22 in Arabidopsis (PubMed:29588169, PubMed:30192741). Interacts directly with ENY2 and UBP22 (PubMed:29588169, PubMed:30192741). Interacts with DDA1 (PubMed:30192741).</text>
</comment>
<comment type="subcellular location">
    <subcellularLocation>
        <location evidence="4">Nucleus</location>
        <location evidence="4">Nucleoplasm</location>
    </subcellularLocation>
    <text evidence="4">Displays a rather patchy distribution forming a punctuated pattern in the euchromatin (PubMed:30192741). Does not localize in the heterochromatic chromocenters or nucleolus (PubMed:30192741).</text>
</comment>
<comment type="PTM">
    <text evidence="4">Ubiquitinated in DET1-dependent manner (PubMed:30192741). Ubiquitination probably leads to its subsequent proteasomal degradation (PubMed:30192741).</text>
</comment>
<comment type="disruption phenotype">
    <text evidence="3">Delayed flowering and increased levels of histone H2B monoubiquitination.</text>
</comment>
<comment type="similarity">
    <text evidence="6">Belongs to the SGF11 family.</text>
</comment>
<protein>
    <recommendedName>
        <fullName evidence="6">SAGA-associated factor 11</fullName>
    </recommendedName>
</protein>
<organism>
    <name type="scientific">Arabidopsis thaliana</name>
    <name type="common">Mouse-ear cress</name>
    <dbReference type="NCBI Taxonomy" id="3702"/>
    <lineage>
        <taxon>Eukaryota</taxon>
        <taxon>Viridiplantae</taxon>
        <taxon>Streptophyta</taxon>
        <taxon>Embryophyta</taxon>
        <taxon>Tracheophyta</taxon>
        <taxon>Spermatophyta</taxon>
        <taxon>Magnoliopsida</taxon>
        <taxon>eudicotyledons</taxon>
        <taxon>Gunneridae</taxon>
        <taxon>Pentapetalae</taxon>
        <taxon>rosids</taxon>
        <taxon>malvids</taxon>
        <taxon>Brassicales</taxon>
        <taxon>Brassicaceae</taxon>
        <taxon>Camelineae</taxon>
        <taxon>Arabidopsis</taxon>
    </lineage>
</organism>